<sequence>MTRAERKRQHINHALSIGQKRETGLDDITFVHVSLPDLALEQVDISTKIGELSSSSPIFINAMTGGGGKLTYEINKSLARAASQAGIPLAVGSQMSALKDPSERLSYEIVRKENPNGLIFANLGSEATAAQAKEAVEMIGANALQIHLNVIQEIVMPEGDRSFSGALKRIEQICSRVSVPVIVKEVGFGMSKASAGKLYEAGAAAVDIGGYGGTNFSKIENLRRQRQISFFNSWGISTAASLAEIRSEFPASTMIASGGLQDALDVAKAIALGASCTGMAGHFLKALTDSGEEGLLEEIQLILEELKLIMTVLGARTIADLQKAPLVIKGETHHWLTERGVNTSSYSVR</sequence>
<gene>
    <name evidence="1" type="primary">fni</name>
    <name type="synonym">idi</name>
    <name type="synonym">ypgA</name>
    <name type="ordered locus">BSU22870</name>
</gene>
<name>IDI2_BACSU</name>
<dbReference type="EC" id="5.3.3.2" evidence="1"/>
<dbReference type="EMBL" id="AB047343">
    <property type="protein sequence ID" value="BAB32625.1"/>
    <property type="molecule type" value="Genomic_DNA"/>
</dbReference>
<dbReference type="EMBL" id="L47648">
    <property type="protein sequence ID" value="AAC83963.1"/>
    <property type="status" value="ALT_INIT"/>
    <property type="molecule type" value="Genomic_DNA"/>
</dbReference>
<dbReference type="EMBL" id="AL009126">
    <property type="protein sequence ID" value="CAB14203.2"/>
    <property type="molecule type" value="Genomic_DNA"/>
</dbReference>
<dbReference type="PIR" id="D69935">
    <property type="entry name" value="D69935"/>
</dbReference>
<dbReference type="RefSeq" id="NP_390168.3">
    <property type="nucleotide sequence ID" value="NC_000964.3"/>
</dbReference>
<dbReference type="RefSeq" id="WP_004399098.1">
    <property type="nucleotide sequence ID" value="NZ_OZ025638.1"/>
</dbReference>
<dbReference type="PDB" id="1P0K">
    <property type="method" value="X-ray"/>
    <property type="resolution" value="1.90 A"/>
    <property type="chains" value="A/B=1-349"/>
</dbReference>
<dbReference type="PDB" id="1P0N">
    <property type="method" value="X-ray"/>
    <property type="resolution" value="2.80 A"/>
    <property type="chains" value="A/B=1-349"/>
</dbReference>
<dbReference type="PDBsum" id="1P0K"/>
<dbReference type="PDBsum" id="1P0N"/>
<dbReference type="SMR" id="P50740"/>
<dbReference type="FunCoup" id="P50740">
    <property type="interactions" value="135"/>
</dbReference>
<dbReference type="STRING" id="224308.BSU22870"/>
<dbReference type="DrugBank" id="DB03247">
    <property type="generic name" value="Flavin mononucleotide"/>
</dbReference>
<dbReference type="PaxDb" id="224308-BSU22870"/>
<dbReference type="EnsemblBacteria" id="CAB14203">
    <property type="protein sequence ID" value="CAB14203"/>
    <property type="gene ID" value="BSU_22870"/>
</dbReference>
<dbReference type="GeneID" id="938985"/>
<dbReference type="KEGG" id="bsu:BSU22870"/>
<dbReference type="PATRIC" id="fig|224308.179.peg.2494"/>
<dbReference type="eggNOG" id="COG1304">
    <property type="taxonomic scope" value="Bacteria"/>
</dbReference>
<dbReference type="InParanoid" id="P50740"/>
<dbReference type="OrthoDB" id="9795032at2"/>
<dbReference type="PhylomeDB" id="P50740"/>
<dbReference type="BioCyc" id="BSUB:BSU22870-MONOMER"/>
<dbReference type="BRENDA" id="5.3.3.2">
    <property type="organism ID" value="658"/>
</dbReference>
<dbReference type="EvolutionaryTrace" id="P50740"/>
<dbReference type="Proteomes" id="UP000001570">
    <property type="component" value="Chromosome"/>
</dbReference>
<dbReference type="GO" id="GO:0005737">
    <property type="term" value="C:cytoplasm"/>
    <property type="evidence" value="ECO:0007669"/>
    <property type="project" value="UniProtKB-SubCell"/>
</dbReference>
<dbReference type="GO" id="GO:0010181">
    <property type="term" value="F:FMN binding"/>
    <property type="evidence" value="ECO:0007669"/>
    <property type="project" value="UniProtKB-UniRule"/>
</dbReference>
<dbReference type="GO" id="GO:0004452">
    <property type="term" value="F:isopentenyl-diphosphate delta-isomerase activity"/>
    <property type="evidence" value="ECO:0007669"/>
    <property type="project" value="UniProtKB-UniRule"/>
</dbReference>
<dbReference type="GO" id="GO:0000287">
    <property type="term" value="F:magnesium ion binding"/>
    <property type="evidence" value="ECO:0007669"/>
    <property type="project" value="UniProtKB-UniRule"/>
</dbReference>
<dbReference type="GO" id="GO:0070402">
    <property type="term" value="F:NADPH binding"/>
    <property type="evidence" value="ECO:0007669"/>
    <property type="project" value="UniProtKB-UniRule"/>
</dbReference>
<dbReference type="GO" id="GO:0016491">
    <property type="term" value="F:oxidoreductase activity"/>
    <property type="evidence" value="ECO:0007669"/>
    <property type="project" value="InterPro"/>
</dbReference>
<dbReference type="GO" id="GO:0008299">
    <property type="term" value="P:isoprenoid biosynthetic process"/>
    <property type="evidence" value="ECO:0007669"/>
    <property type="project" value="UniProtKB-UniRule"/>
</dbReference>
<dbReference type="CDD" id="cd02811">
    <property type="entry name" value="IDI-2_FMN"/>
    <property type="match status" value="1"/>
</dbReference>
<dbReference type="Gene3D" id="3.20.20.70">
    <property type="entry name" value="Aldolase class I"/>
    <property type="match status" value="1"/>
</dbReference>
<dbReference type="HAMAP" id="MF_00354">
    <property type="entry name" value="Idi_2"/>
    <property type="match status" value="1"/>
</dbReference>
<dbReference type="InterPro" id="IPR013785">
    <property type="entry name" value="Aldolase_TIM"/>
</dbReference>
<dbReference type="InterPro" id="IPR000262">
    <property type="entry name" value="FMN-dep_DH"/>
</dbReference>
<dbReference type="InterPro" id="IPR011179">
    <property type="entry name" value="IPdP_isomerase"/>
</dbReference>
<dbReference type="NCBIfam" id="TIGR02151">
    <property type="entry name" value="IPP_isom_2"/>
    <property type="match status" value="1"/>
</dbReference>
<dbReference type="PANTHER" id="PTHR43665">
    <property type="entry name" value="ISOPENTENYL-DIPHOSPHATE DELTA-ISOMERASE"/>
    <property type="match status" value="1"/>
</dbReference>
<dbReference type="PANTHER" id="PTHR43665:SF1">
    <property type="entry name" value="ISOPENTENYL-DIPHOSPHATE DELTA-ISOMERASE"/>
    <property type="match status" value="1"/>
</dbReference>
<dbReference type="Pfam" id="PF01070">
    <property type="entry name" value="FMN_dh"/>
    <property type="match status" value="1"/>
</dbReference>
<dbReference type="PIRSF" id="PIRSF003314">
    <property type="entry name" value="IPP_isomerase"/>
    <property type="match status" value="1"/>
</dbReference>
<dbReference type="SMART" id="SM01240">
    <property type="entry name" value="IMPDH"/>
    <property type="match status" value="1"/>
</dbReference>
<dbReference type="SUPFAM" id="SSF51395">
    <property type="entry name" value="FMN-linked oxidoreductases"/>
    <property type="match status" value="1"/>
</dbReference>
<organism>
    <name type="scientific">Bacillus subtilis (strain 168)</name>
    <dbReference type="NCBI Taxonomy" id="224308"/>
    <lineage>
        <taxon>Bacteria</taxon>
        <taxon>Bacillati</taxon>
        <taxon>Bacillota</taxon>
        <taxon>Bacilli</taxon>
        <taxon>Bacillales</taxon>
        <taxon>Bacillaceae</taxon>
        <taxon>Bacillus</taxon>
    </lineage>
</organism>
<proteinExistence type="evidence at protein level"/>
<feature type="chain" id="PRO_0000134404" description="Isopentenyl-diphosphate delta-isomerase">
    <location>
        <begin position="1"/>
        <end position="349"/>
    </location>
</feature>
<feature type="binding site" evidence="1">
    <location>
        <begin position="6"/>
        <end position="7"/>
    </location>
    <ligand>
        <name>substrate</name>
    </ligand>
</feature>
<feature type="binding site" evidence="4">
    <location>
        <begin position="62"/>
        <end position="64"/>
    </location>
    <ligand>
        <name>FMN</name>
        <dbReference type="ChEBI" id="CHEBI:58210"/>
    </ligand>
</feature>
<feature type="binding site" evidence="1 2">
    <location>
        <position position="93"/>
    </location>
    <ligand>
        <name>FMN</name>
        <dbReference type="ChEBI" id="CHEBI:58210"/>
    </ligand>
</feature>
<feature type="binding site" evidence="1 2">
    <location>
        <position position="122"/>
    </location>
    <ligand>
        <name>FMN</name>
        <dbReference type="ChEBI" id="CHEBI:58210"/>
    </ligand>
</feature>
<feature type="binding site" evidence="1">
    <location>
        <position position="152"/>
    </location>
    <ligand>
        <name>substrate</name>
    </ligand>
</feature>
<feature type="binding site" evidence="1">
    <location>
        <position position="153"/>
    </location>
    <ligand>
        <name>Mg(2+)</name>
        <dbReference type="ChEBI" id="CHEBI:18420"/>
    </ligand>
</feature>
<feature type="binding site" evidence="1 2">
    <location>
        <position position="184"/>
    </location>
    <ligand>
        <name>FMN</name>
        <dbReference type="ChEBI" id="CHEBI:58210"/>
    </ligand>
</feature>
<feature type="binding site" evidence="1">
    <location>
        <position position="214"/>
    </location>
    <ligand>
        <name>FMN</name>
        <dbReference type="ChEBI" id="CHEBI:58210"/>
    </ligand>
</feature>
<feature type="binding site" evidence="1 2">
    <location>
        <begin position="258"/>
        <end position="259"/>
    </location>
    <ligand>
        <name>FMN</name>
        <dbReference type="ChEBI" id="CHEBI:58210"/>
    </ligand>
</feature>
<feature type="binding site" evidence="1 2">
    <location>
        <begin position="280"/>
        <end position="281"/>
    </location>
    <ligand>
        <name>FMN</name>
        <dbReference type="ChEBI" id="CHEBI:58210"/>
    </ligand>
</feature>
<feature type="helix" evidence="5">
    <location>
        <begin position="25"/>
        <end position="27"/>
    </location>
</feature>
<feature type="strand" evidence="5">
    <location>
        <begin position="28"/>
        <end position="30"/>
    </location>
</feature>
<feature type="helix" evidence="5">
    <location>
        <begin position="40"/>
        <end position="42"/>
    </location>
</feature>
<feature type="strand" evidence="5">
    <location>
        <begin position="47"/>
        <end position="49"/>
    </location>
</feature>
<feature type="strand" evidence="5">
    <location>
        <begin position="52"/>
        <end position="55"/>
    </location>
</feature>
<feature type="strand" evidence="5">
    <location>
        <begin position="57"/>
        <end position="61"/>
    </location>
</feature>
<feature type="helix" evidence="5">
    <location>
        <begin position="68"/>
        <end position="85"/>
    </location>
</feature>
<feature type="turn" evidence="5">
    <location>
        <begin position="95"/>
        <end position="99"/>
    </location>
</feature>
<feature type="helix" evidence="5">
    <location>
        <begin position="101"/>
        <end position="113"/>
    </location>
</feature>
<feature type="strand" evidence="5">
    <location>
        <begin position="115"/>
        <end position="117"/>
    </location>
</feature>
<feature type="strand" evidence="5">
    <location>
        <begin position="119"/>
        <end position="124"/>
    </location>
</feature>
<feature type="helix" evidence="5">
    <location>
        <begin position="129"/>
        <end position="138"/>
    </location>
</feature>
<feature type="strand" evidence="5">
    <location>
        <begin position="142"/>
        <end position="148"/>
    </location>
</feature>
<feature type="turn" evidence="5">
    <location>
        <begin position="150"/>
        <end position="153"/>
    </location>
</feature>
<feature type="helix" evidence="5">
    <location>
        <begin position="166"/>
        <end position="176"/>
    </location>
</feature>
<feature type="strand" evidence="5">
    <location>
        <begin position="181"/>
        <end position="188"/>
    </location>
</feature>
<feature type="helix" evidence="5">
    <location>
        <begin position="192"/>
        <end position="201"/>
    </location>
</feature>
<feature type="strand" evidence="5">
    <location>
        <begin position="204"/>
        <end position="209"/>
    </location>
</feature>
<feature type="helix" evidence="5">
    <location>
        <begin position="228"/>
        <end position="231"/>
    </location>
</feature>
<feature type="helix" evidence="5">
    <location>
        <begin position="238"/>
        <end position="248"/>
    </location>
</feature>
<feature type="strand" evidence="5">
    <location>
        <begin position="252"/>
        <end position="259"/>
    </location>
</feature>
<feature type="helix" evidence="5">
    <location>
        <begin position="263"/>
        <end position="271"/>
    </location>
</feature>
<feature type="strand" evidence="5">
    <location>
        <begin position="275"/>
        <end position="279"/>
    </location>
</feature>
<feature type="helix" evidence="5">
    <location>
        <begin position="281"/>
        <end position="313"/>
    </location>
</feature>
<feature type="helix" evidence="5">
    <location>
        <begin position="318"/>
        <end position="321"/>
    </location>
</feature>
<feature type="strand" evidence="5">
    <location>
        <begin position="326"/>
        <end position="328"/>
    </location>
</feature>
<feature type="helix" evidence="5">
    <location>
        <begin position="330"/>
        <end position="338"/>
    </location>
</feature>
<feature type="helix" evidence="5">
    <location>
        <begin position="344"/>
        <end position="348"/>
    </location>
</feature>
<comment type="function">
    <text evidence="1">Involved in the biosynthesis of isoprenoids. Catalyzes the 1,3-allylic rearrangement of the homoallylic substrate isopentenyl (IPP) to its allylic isomer, dimethylallyl diphosphate (DMAPP).</text>
</comment>
<comment type="catalytic activity">
    <reaction evidence="1">
        <text>isopentenyl diphosphate = dimethylallyl diphosphate</text>
        <dbReference type="Rhea" id="RHEA:23284"/>
        <dbReference type="ChEBI" id="CHEBI:57623"/>
        <dbReference type="ChEBI" id="CHEBI:128769"/>
        <dbReference type="EC" id="5.3.3.2"/>
    </reaction>
</comment>
<comment type="cofactor">
    <cofactor evidence="1 2">
        <name>FMN</name>
        <dbReference type="ChEBI" id="CHEBI:58210"/>
    </cofactor>
</comment>
<comment type="cofactor">
    <cofactor evidence="1">
        <name>NADPH</name>
        <dbReference type="ChEBI" id="CHEBI:57783"/>
    </cofactor>
</comment>
<comment type="cofactor">
    <cofactor evidence="1">
        <name>Mg(2+)</name>
        <dbReference type="ChEBI" id="CHEBI:18420"/>
    </cofactor>
</comment>
<comment type="subunit">
    <text evidence="1 2">Homooctamer. Dimer of tetramers.</text>
</comment>
<comment type="subcellular location">
    <subcellularLocation>
        <location evidence="1">Cytoplasm</location>
    </subcellularLocation>
</comment>
<comment type="similarity">
    <text evidence="1">Belongs to the IPP isomerase type 2 family.</text>
</comment>
<comment type="sequence caution" evidence="3">
    <conflict type="erroneous initiation">
        <sequence resource="EMBL-CDS" id="AAC83963"/>
    </conflict>
    <text>Truncated N-terminus.</text>
</comment>
<keyword id="KW-0002">3D-structure</keyword>
<keyword id="KW-0963">Cytoplasm</keyword>
<keyword id="KW-0285">Flavoprotein</keyword>
<keyword id="KW-0288">FMN</keyword>
<keyword id="KW-0413">Isomerase</keyword>
<keyword id="KW-0414">Isoprene biosynthesis</keyword>
<keyword id="KW-0460">Magnesium</keyword>
<keyword id="KW-0479">Metal-binding</keyword>
<keyword id="KW-0521">NADP</keyword>
<keyword id="KW-1185">Reference proteome</keyword>
<evidence type="ECO:0000255" key="1">
    <source>
        <dbReference type="HAMAP-Rule" id="MF_00354"/>
    </source>
</evidence>
<evidence type="ECO:0000269" key="2">
    <source>
    </source>
</evidence>
<evidence type="ECO:0000305" key="3"/>
<evidence type="ECO:0000305" key="4">
    <source>
    </source>
</evidence>
<evidence type="ECO:0007829" key="5">
    <source>
        <dbReference type="PDB" id="1P0K"/>
    </source>
</evidence>
<protein>
    <recommendedName>
        <fullName evidence="1">Isopentenyl-diphosphate delta-isomerase</fullName>
        <shortName evidence="1">IPP isomerase</shortName>
        <ecNumber evidence="1">5.3.3.2</ecNumber>
    </recommendedName>
    <alternativeName>
        <fullName evidence="1">Isopentenyl diphosphate:dimethylallyl diphosphate isomerase</fullName>
    </alternativeName>
    <alternativeName>
        <fullName evidence="1">Isopentenyl pyrophosphate isomerase</fullName>
    </alternativeName>
    <alternativeName>
        <fullName evidence="1">Type 2 isopentenyl diphosphate isomerase</fullName>
        <shortName evidence="1">IDI-2</shortName>
    </alternativeName>
</protein>
<accession>P50740</accession>
<reference key="1">
    <citation type="submission" date="2000-08" db="EMBL/GenBank/DDBJ databases">
        <title>Isopentenyl diphosphate isomerase from Bacillus subtilis.</title>
        <authorList>
            <person name="Kuzuyama T."/>
        </authorList>
    </citation>
    <scope>NUCLEOTIDE SEQUENCE [GENOMIC DNA]</scope>
</reference>
<reference key="2">
    <citation type="journal article" date="1996" name="Microbiology">
        <title>Sequence analysis of the Bacillus subtilis chromosome region between the serA and kdg loci cloned in a yeast artificial chromosome.</title>
        <authorList>
            <person name="Sorokin A.V."/>
            <person name="Azevedo V."/>
            <person name="Zumstein E."/>
            <person name="Galleron N."/>
            <person name="Ehrlich S.D."/>
            <person name="Serror P."/>
        </authorList>
    </citation>
    <scope>NUCLEOTIDE SEQUENCE [GENOMIC DNA]</scope>
    <source>
        <strain>168 / Marburg / ATCC 6051 / DSM 10 / JCM 1465 / NBRC 13719 / NCIMB 3610 / NRRL NRS-744 / VKM B-501</strain>
    </source>
</reference>
<reference key="3">
    <citation type="journal article" date="1997" name="Nature">
        <title>The complete genome sequence of the Gram-positive bacterium Bacillus subtilis.</title>
        <authorList>
            <person name="Kunst F."/>
            <person name="Ogasawara N."/>
            <person name="Moszer I."/>
            <person name="Albertini A.M."/>
            <person name="Alloni G."/>
            <person name="Azevedo V."/>
            <person name="Bertero M.G."/>
            <person name="Bessieres P."/>
            <person name="Bolotin A."/>
            <person name="Borchert S."/>
            <person name="Borriss R."/>
            <person name="Boursier L."/>
            <person name="Brans A."/>
            <person name="Braun M."/>
            <person name="Brignell S.C."/>
            <person name="Bron S."/>
            <person name="Brouillet S."/>
            <person name="Bruschi C.V."/>
            <person name="Caldwell B."/>
            <person name="Capuano V."/>
            <person name="Carter N.M."/>
            <person name="Choi S.-K."/>
            <person name="Codani J.-J."/>
            <person name="Connerton I.F."/>
            <person name="Cummings N.J."/>
            <person name="Daniel R.A."/>
            <person name="Denizot F."/>
            <person name="Devine K.M."/>
            <person name="Duesterhoeft A."/>
            <person name="Ehrlich S.D."/>
            <person name="Emmerson P.T."/>
            <person name="Entian K.-D."/>
            <person name="Errington J."/>
            <person name="Fabret C."/>
            <person name="Ferrari E."/>
            <person name="Foulger D."/>
            <person name="Fritz C."/>
            <person name="Fujita M."/>
            <person name="Fujita Y."/>
            <person name="Fuma S."/>
            <person name="Galizzi A."/>
            <person name="Galleron N."/>
            <person name="Ghim S.-Y."/>
            <person name="Glaser P."/>
            <person name="Goffeau A."/>
            <person name="Golightly E.J."/>
            <person name="Grandi G."/>
            <person name="Guiseppi G."/>
            <person name="Guy B.J."/>
            <person name="Haga K."/>
            <person name="Haiech J."/>
            <person name="Harwood C.R."/>
            <person name="Henaut A."/>
            <person name="Hilbert H."/>
            <person name="Holsappel S."/>
            <person name="Hosono S."/>
            <person name="Hullo M.-F."/>
            <person name="Itaya M."/>
            <person name="Jones L.-M."/>
            <person name="Joris B."/>
            <person name="Karamata D."/>
            <person name="Kasahara Y."/>
            <person name="Klaerr-Blanchard M."/>
            <person name="Klein C."/>
            <person name="Kobayashi Y."/>
            <person name="Koetter P."/>
            <person name="Koningstein G."/>
            <person name="Krogh S."/>
            <person name="Kumano M."/>
            <person name="Kurita K."/>
            <person name="Lapidus A."/>
            <person name="Lardinois S."/>
            <person name="Lauber J."/>
            <person name="Lazarevic V."/>
            <person name="Lee S.-M."/>
            <person name="Levine A."/>
            <person name="Liu H."/>
            <person name="Masuda S."/>
            <person name="Mauel C."/>
            <person name="Medigue C."/>
            <person name="Medina N."/>
            <person name="Mellado R.P."/>
            <person name="Mizuno M."/>
            <person name="Moestl D."/>
            <person name="Nakai S."/>
            <person name="Noback M."/>
            <person name="Noone D."/>
            <person name="O'Reilly M."/>
            <person name="Ogawa K."/>
            <person name="Ogiwara A."/>
            <person name="Oudega B."/>
            <person name="Park S.-H."/>
            <person name="Parro V."/>
            <person name="Pohl T.M."/>
            <person name="Portetelle D."/>
            <person name="Porwollik S."/>
            <person name="Prescott A.M."/>
            <person name="Presecan E."/>
            <person name="Pujic P."/>
            <person name="Purnelle B."/>
            <person name="Rapoport G."/>
            <person name="Rey M."/>
            <person name="Reynolds S."/>
            <person name="Rieger M."/>
            <person name="Rivolta C."/>
            <person name="Rocha E."/>
            <person name="Roche B."/>
            <person name="Rose M."/>
            <person name="Sadaie Y."/>
            <person name="Sato T."/>
            <person name="Scanlan E."/>
            <person name="Schleich S."/>
            <person name="Schroeter R."/>
            <person name="Scoffone F."/>
            <person name="Sekiguchi J."/>
            <person name="Sekowska A."/>
            <person name="Seror S.J."/>
            <person name="Serror P."/>
            <person name="Shin B.-S."/>
            <person name="Soldo B."/>
            <person name="Sorokin A."/>
            <person name="Tacconi E."/>
            <person name="Takagi T."/>
            <person name="Takahashi H."/>
            <person name="Takemaru K."/>
            <person name="Takeuchi M."/>
            <person name="Tamakoshi A."/>
            <person name="Tanaka T."/>
            <person name="Terpstra P."/>
            <person name="Tognoni A."/>
            <person name="Tosato V."/>
            <person name="Uchiyama S."/>
            <person name="Vandenbol M."/>
            <person name="Vannier F."/>
            <person name="Vassarotti A."/>
            <person name="Viari A."/>
            <person name="Wambutt R."/>
            <person name="Wedler E."/>
            <person name="Wedler H."/>
            <person name="Weitzenegger T."/>
            <person name="Winters P."/>
            <person name="Wipat A."/>
            <person name="Yamamoto H."/>
            <person name="Yamane K."/>
            <person name="Yasumoto K."/>
            <person name="Yata K."/>
            <person name="Yoshida K."/>
            <person name="Yoshikawa H.-F."/>
            <person name="Zumstein E."/>
            <person name="Yoshikawa H."/>
            <person name="Danchin A."/>
        </authorList>
    </citation>
    <scope>NUCLEOTIDE SEQUENCE [LARGE SCALE GENOMIC DNA]</scope>
    <source>
        <strain>168</strain>
    </source>
</reference>
<reference key="4">
    <citation type="journal article" date="2003" name="J. Mol. Biol.">
        <title>Crystal structure of the type II isopentenyl diphosphate:dimethylallyl diphosphate isomerase from Bacillus subtilis.</title>
        <authorList>
            <person name="Steinbacher S."/>
            <person name="Kaiser J."/>
            <person name="Gerhardt S."/>
            <person name="Eisenreich W."/>
            <person name="Huber R."/>
            <person name="Bacher A."/>
            <person name="Rohdich F."/>
        </authorList>
    </citation>
    <scope>X-RAY CRYSTALLOGRAPHY (1.90 ANGSTROMS) IN COMPLEX WITH FMN</scope>
    <scope>COFACTOR</scope>
    <scope>SUBUNIT</scope>
</reference>